<sequence length="223" mass="24557">MKFAVLVFPGSNCDRDMFNAAIKSGVEAEYVDYRETSLSGFDGVLIPGGFSFGDYLRSGAMASVAPIISEVKRLATEGKPVLGVCNGFQILTEIGLLPGALLHNDSHLFISRNEELEIVNNQTAFTNLYEQGEKVIYPVAHGEGHYYCTDEIYQQLKANNQIILKYVNNPNGSYDDIAGIVNEKGNVCGMMPHPERALETLLGTDSGVKLFEAMVKSWREQHV</sequence>
<reference key="1">
    <citation type="journal article" date="2001" name="Lancet">
        <title>Whole genome sequencing of meticillin-resistant Staphylococcus aureus.</title>
        <authorList>
            <person name="Kuroda M."/>
            <person name="Ohta T."/>
            <person name="Uchiyama I."/>
            <person name="Baba T."/>
            <person name="Yuzawa H."/>
            <person name="Kobayashi I."/>
            <person name="Cui L."/>
            <person name="Oguchi A."/>
            <person name="Aoki K."/>
            <person name="Nagai Y."/>
            <person name="Lian J.-Q."/>
            <person name="Ito T."/>
            <person name="Kanamori M."/>
            <person name="Matsumaru H."/>
            <person name="Maruyama A."/>
            <person name="Murakami H."/>
            <person name="Hosoyama A."/>
            <person name="Mizutani-Ui Y."/>
            <person name="Takahashi N.K."/>
            <person name="Sawano T."/>
            <person name="Inoue R."/>
            <person name="Kaito C."/>
            <person name="Sekimizu K."/>
            <person name="Hirakawa H."/>
            <person name="Kuhara S."/>
            <person name="Goto S."/>
            <person name="Yabuzaki J."/>
            <person name="Kanehisa M."/>
            <person name="Yamashita A."/>
            <person name="Oshima K."/>
            <person name="Furuya K."/>
            <person name="Yoshino C."/>
            <person name="Shiba T."/>
            <person name="Hattori M."/>
            <person name="Ogasawara N."/>
            <person name="Hayashi H."/>
            <person name="Hiramatsu K."/>
        </authorList>
    </citation>
    <scope>NUCLEOTIDE SEQUENCE [LARGE SCALE GENOMIC DNA]</scope>
    <source>
        <strain>N315</strain>
    </source>
</reference>
<reference key="2">
    <citation type="journal article" date="2005" name="J. Microbiol. Methods">
        <title>Correlation of proteomic and transcriptomic profiles of Staphylococcus aureus during the post-exponential phase of growth.</title>
        <authorList>
            <person name="Scherl A."/>
            <person name="Francois P."/>
            <person name="Bento M."/>
            <person name="Deshusses J.M."/>
            <person name="Charbonnier Y."/>
            <person name="Converset V."/>
            <person name="Huyghe A."/>
            <person name="Walter N."/>
            <person name="Hoogland C."/>
            <person name="Appel R.D."/>
            <person name="Sanchez J.-C."/>
            <person name="Zimmermann-Ivol C.G."/>
            <person name="Corthals G.L."/>
            <person name="Hochstrasser D.F."/>
            <person name="Schrenzel J."/>
        </authorList>
    </citation>
    <scope>IDENTIFICATION BY MASS SPECTROMETRY</scope>
    <source>
        <strain>N315</strain>
    </source>
</reference>
<reference key="3">
    <citation type="submission" date="2007-10" db="UniProtKB">
        <title>Shotgun proteomic analysis of total and membrane protein extracts of S. aureus strain N315.</title>
        <authorList>
            <person name="Vaezzadeh A.R."/>
            <person name="Deshusses J."/>
            <person name="Lescuyer P."/>
            <person name="Hochstrasser D.F."/>
        </authorList>
    </citation>
    <scope>IDENTIFICATION BY MASS SPECTROMETRY [LARGE SCALE ANALYSIS]</scope>
    <source>
        <strain>N315</strain>
    </source>
</reference>
<gene>
    <name evidence="1" type="primary">purQ</name>
    <name type="ordered locus">SA0920</name>
</gene>
<name>PURQ_STAAN</name>
<comment type="function">
    <text evidence="1">Part of the phosphoribosylformylglycinamidine synthase complex involved in the purines biosynthetic pathway. Catalyzes the ATP-dependent conversion of formylglycinamide ribonucleotide (FGAR) and glutamine to yield formylglycinamidine ribonucleotide (FGAM) and glutamate. The FGAM synthase complex is composed of three subunits. PurQ produces an ammonia molecule by converting glutamine to glutamate. PurL transfers the ammonia molecule to FGAR to form FGAM in an ATP-dependent manner. PurS interacts with PurQ and PurL and is thought to assist in the transfer of the ammonia molecule from PurQ to PurL.</text>
</comment>
<comment type="catalytic activity">
    <reaction evidence="1">
        <text>N(2)-formyl-N(1)-(5-phospho-beta-D-ribosyl)glycinamide + L-glutamine + ATP + H2O = 2-formamido-N(1)-(5-O-phospho-beta-D-ribosyl)acetamidine + L-glutamate + ADP + phosphate + H(+)</text>
        <dbReference type="Rhea" id="RHEA:17129"/>
        <dbReference type="ChEBI" id="CHEBI:15377"/>
        <dbReference type="ChEBI" id="CHEBI:15378"/>
        <dbReference type="ChEBI" id="CHEBI:29985"/>
        <dbReference type="ChEBI" id="CHEBI:30616"/>
        <dbReference type="ChEBI" id="CHEBI:43474"/>
        <dbReference type="ChEBI" id="CHEBI:58359"/>
        <dbReference type="ChEBI" id="CHEBI:147286"/>
        <dbReference type="ChEBI" id="CHEBI:147287"/>
        <dbReference type="ChEBI" id="CHEBI:456216"/>
        <dbReference type="EC" id="6.3.5.3"/>
    </reaction>
</comment>
<comment type="catalytic activity">
    <reaction evidence="1">
        <text>L-glutamine + H2O = L-glutamate + NH4(+)</text>
        <dbReference type="Rhea" id="RHEA:15889"/>
        <dbReference type="ChEBI" id="CHEBI:15377"/>
        <dbReference type="ChEBI" id="CHEBI:28938"/>
        <dbReference type="ChEBI" id="CHEBI:29985"/>
        <dbReference type="ChEBI" id="CHEBI:58359"/>
        <dbReference type="EC" id="3.5.1.2"/>
    </reaction>
</comment>
<comment type="pathway">
    <text evidence="1">Purine metabolism; IMP biosynthesis via de novo pathway; 5-amino-1-(5-phospho-D-ribosyl)imidazole from N(2)-formyl-N(1)-(5-phospho-D-ribosyl)glycinamide: step 1/2.</text>
</comment>
<comment type="subunit">
    <text evidence="1">Part of the FGAM synthase complex composed of 1 PurL, 1 PurQ and 2 PurS subunits.</text>
</comment>
<comment type="subcellular location">
    <subcellularLocation>
        <location evidence="1">Cytoplasm</location>
    </subcellularLocation>
</comment>
<accession>P99166</accession>
<accession>Q99V29</accession>
<evidence type="ECO:0000255" key="1">
    <source>
        <dbReference type="HAMAP-Rule" id="MF_00421"/>
    </source>
</evidence>
<proteinExistence type="evidence at protein level"/>
<dbReference type="EC" id="6.3.5.3" evidence="1"/>
<dbReference type="EC" id="3.5.1.2" evidence="1"/>
<dbReference type="EMBL" id="BA000018">
    <property type="protein sequence ID" value="BAB42165.1"/>
    <property type="molecule type" value="Genomic_DNA"/>
</dbReference>
<dbReference type="PIR" id="B89876">
    <property type="entry name" value="B89876"/>
</dbReference>
<dbReference type="RefSeq" id="WP_000666806.1">
    <property type="nucleotide sequence ID" value="NC_002745.2"/>
</dbReference>
<dbReference type="SMR" id="P99166"/>
<dbReference type="EnsemblBacteria" id="BAB42165">
    <property type="protein sequence ID" value="BAB42165"/>
    <property type="gene ID" value="BAB42165"/>
</dbReference>
<dbReference type="KEGG" id="sau:SA0920"/>
<dbReference type="HOGENOM" id="CLU_001031_3_1_9"/>
<dbReference type="UniPathway" id="UPA00074">
    <property type="reaction ID" value="UER00128"/>
</dbReference>
<dbReference type="GO" id="GO:0005737">
    <property type="term" value="C:cytoplasm"/>
    <property type="evidence" value="ECO:0007669"/>
    <property type="project" value="UniProtKB-SubCell"/>
</dbReference>
<dbReference type="GO" id="GO:0005524">
    <property type="term" value="F:ATP binding"/>
    <property type="evidence" value="ECO:0007669"/>
    <property type="project" value="UniProtKB-KW"/>
</dbReference>
<dbReference type="GO" id="GO:0004359">
    <property type="term" value="F:glutaminase activity"/>
    <property type="evidence" value="ECO:0007669"/>
    <property type="project" value="UniProtKB-EC"/>
</dbReference>
<dbReference type="GO" id="GO:0004642">
    <property type="term" value="F:phosphoribosylformylglycinamidine synthase activity"/>
    <property type="evidence" value="ECO:0007669"/>
    <property type="project" value="UniProtKB-UniRule"/>
</dbReference>
<dbReference type="GO" id="GO:0006189">
    <property type="term" value="P:'de novo' IMP biosynthetic process"/>
    <property type="evidence" value="ECO:0007669"/>
    <property type="project" value="UniProtKB-UniRule"/>
</dbReference>
<dbReference type="CDD" id="cd01740">
    <property type="entry name" value="GATase1_FGAR_AT"/>
    <property type="match status" value="1"/>
</dbReference>
<dbReference type="Gene3D" id="3.40.50.880">
    <property type="match status" value="1"/>
</dbReference>
<dbReference type="HAMAP" id="MF_00421">
    <property type="entry name" value="PurQ"/>
    <property type="match status" value="1"/>
</dbReference>
<dbReference type="InterPro" id="IPR029062">
    <property type="entry name" value="Class_I_gatase-like"/>
</dbReference>
<dbReference type="InterPro" id="IPR010075">
    <property type="entry name" value="PRibForGlyAmidine_synth_PurQ"/>
</dbReference>
<dbReference type="NCBIfam" id="TIGR01737">
    <property type="entry name" value="FGAM_synth_I"/>
    <property type="match status" value="1"/>
</dbReference>
<dbReference type="NCBIfam" id="NF002957">
    <property type="entry name" value="PRK03619.1"/>
    <property type="match status" value="1"/>
</dbReference>
<dbReference type="PANTHER" id="PTHR47552">
    <property type="entry name" value="PHOSPHORIBOSYLFORMYLGLYCINAMIDINE SYNTHASE SUBUNIT PURQ"/>
    <property type="match status" value="1"/>
</dbReference>
<dbReference type="PANTHER" id="PTHR47552:SF1">
    <property type="entry name" value="PHOSPHORIBOSYLFORMYLGLYCINAMIDINE SYNTHASE SUBUNIT PURQ"/>
    <property type="match status" value="1"/>
</dbReference>
<dbReference type="Pfam" id="PF13507">
    <property type="entry name" value="GATase_5"/>
    <property type="match status" value="1"/>
</dbReference>
<dbReference type="PIRSF" id="PIRSF001586">
    <property type="entry name" value="FGAM_synth_I"/>
    <property type="match status" value="1"/>
</dbReference>
<dbReference type="SMART" id="SM01211">
    <property type="entry name" value="GATase_5"/>
    <property type="match status" value="1"/>
</dbReference>
<dbReference type="SUPFAM" id="SSF52317">
    <property type="entry name" value="Class I glutamine amidotransferase-like"/>
    <property type="match status" value="1"/>
</dbReference>
<dbReference type="PROSITE" id="PS51273">
    <property type="entry name" value="GATASE_TYPE_1"/>
    <property type="match status" value="1"/>
</dbReference>
<protein>
    <recommendedName>
        <fullName evidence="1">Phosphoribosylformylglycinamidine synthase subunit PurQ</fullName>
        <shortName evidence="1">FGAM synthase</shortName>
        <ecNumber evidence="1">6.3.5.3</ecNumber>
    </recommendedName>
    <alternativeName>
        <fullName evidence="1">Formylglycinamide ribonucleotide amidotransferase subunit I</fullName>
        <shortName evidence="1">FGAR amidotransferase I</shortName>
        <shortName evidence="1">FGAR-AT I</shortName>
    </alternativeName>
    <alternativeName>
        <fullName evidence="1">Glutaminase PurQ</fullName>
        <ecNumber evidence="1">3.5.1.2</ecNumber>
    </alternativeName>
    <alternativeName>
        <fullName evidence="1">Phosphoribosylformylglycinamidine synthase subunit I</fullName>
    </alternativeName>
</protein>
<keyword id="KW-0067">ATP-binding</keyword>
<keyword id="KW-0963">Cytoplasm</keyword>
<keyword id="KW-0315">Glutamine amidotransferase</keyword>
<keyword id="KW-0378">Hydrolase</keyword>
<keyword id="KW-0436">Ligase</keyword>
<keyword id="KW-0547">Nucleotide-binding</keyword>
<keyword id="KW-0658">Purine biosynthesis</keyword>
<feature type="chain" id="PRO_0000100585" description="Phosphoribosylformylglycinamidine synthase subunit PurQ">
    <location>
        <begin position="1"/>
        <end position="223"/>
    </location>
</feature>
<feature type="domain" description="Glutamine amidotransferase type-1" evidence="1">
    <location>
        <begin position="3"/>
        <end position="223"/>
    </location>
</feature>
<feature type="active site" description="Nucleophile" evidence="1">
    <location>
        <position position="85"/>
    </location>
</feature>
<feature type="active site" evidence="1">
    <location>
        <position position="193"/>
    </location>
</feature>
<feature type="active site" evidence="1">
    <location>
        <position position="195"/>
    </location>
</feature>
<organism>
    <name type="scientific">Staphylococcus aureus (strain N315)</name>
    <dbReference type="NCBI Taxonomy" id="158879"/>
    <lineage>
        <taxon>Bacteria</taxon>
        <taxon>Bacillati</taxon>
        <taxon>Bacillota</taxon>
        <taxon>Bacilli</taxon>
        <taxon>Bacillales</taxon>
        <taxon>Staphylococcaceae</taxon>
        <taxon>Staphylococcus</taxon>
    </lineage>
</organism>